<protein>
    <recommendedName>
        <fullName evidence="1">Elongation factor Ts</fullName>
        <shortName evidence="1">EF-Ts</shortName>
    </recommendedName>
</protein>
<comment type="function">
    <text evidence="1">Associates with the EF-Tu.GDP complex and induces the exchange of GDP to GTP. It remains bound to the aminoacyl-tRNA.EF-Tu.GTP complex up to the GTP hydrolysis stage on the ribosome.</text>
</comment>
<comment type="subcellular location">
    <subcellularLocation>
        <location evidence="1">Cytoplasm</location>
    </subcellularLocation>
</comment>
<comment type="similarity">
    <text evidence="1">Belongs to the EF-Ts family.</text>
</comment>
<evidence type="ECO:0000255" key="1">
    <source>
        <dbReference type="HAMAP-Rule" id="MF_00050"/>
    </source>
</evidence>
<accession>B5BAM7</accession>
<organism>
    <name type="scientific">Salmonella paratyphi A (strain AKU_12601)</name>
    <dbReference type="NCBI Taxonomy" id="554290"/>
    <lineage>
        <taxon>Bacteria</taxon>
        <taxon>Pseudomonadati</taxon>
        <taxon>Pseudomonadota</taxon>
        <taxon>Gammaproteobacteria</taxon>
        <taxon>Enterobacterales</taxon>
        <taxon>Enterobacteriaceae</taxon>
        <taxon>Salmonella</taxon>
    </lineage>
</organism>
<feature type="chain" id="PRO_1000116787" description="Elongation factor Ts">
    <location>
        <begin position="1"/>
        <end position="283"/>
    </location>
</feature>
<feature type="region of interest" description="Involved in Mg(2+) ion dislocation from EF-Tu" evidence="1">
    <location>
        <begin position="80"/>
        <end position="83"/>
    </location>
</feature>
<gene>
    <name evidence="1" type="primary">tsf</name>
    <name type="ordered locus">SSPA0216</name>
</gene>
<keyword id="KW-0963">Cytoplasm</keyword>
<keyword id="KW-0251">Elongation factor</keyword>
<keyword id="KW-0648">Protein biosynthesis</keyword>
<name>EFTS_SALPK</name>
<proteinExistence type="inferred from homology"/>
<dbReference type="EMBL" id="FM200053">
    <property type="protein sequence ID" value="CAR58330.1"/>
    <property type="molecule type" value="Genomic_DNA"/>
</dbReference>
<dbReference type="RefSeq" id="WP_000808107.1">
    <property type="nucleotide sequence ID" value="NC_011147.1"/>
</dbReference>
<dbReference type="SMR" id="B5BAM7"/>
<dbReference type="KEGG" id="sek:SSPA0216"/>
<dbReference type="HOGENOM" id="CLU_047155_0_2_6"/>
<dbReference type="Proteomes" id="UP000001869">
    <property type="component" value="Chromosome"/>
</dbReference>
<dbReference type="GO" id="GO:0005737">
    <property type="term" value="C:cytoplasm"/>
    <property type="evidence" value="ECO:0007669"/>
    <property type="project" value="UniProtKB-SubCell"/>
</dbReference>
<dbReference type="GO" id="GO:0003746">
    <property type="term" value="F:translation elongation factor activity"/>
    <property type="evidence" value="ECO:0007669"/>
    <property type="project" value="UniProtKB-UniRule"/>
</dbReference>
<dbReference type="CDD" id="cd14275">
    <property type="entry name" value="UBA_EF-Ts"/>
    <property type="match status" value="1"/>
</dbReference>
<dbReference type="FunFam" id="1.10.286.20:FF:000001">
    <property type="entry name" value="Elongation factor Ts"/>
    <property type="match status" value="1"/>
</dbReference>
<dbReference type="FunFam" id="1.10.8.10:FF:000001">
    <property type="entry name" value="Elongation factor Ts"/>
    <property type="match status" value="1"/>
</dbReference>
<dbReference type="FunFam" id="3.30.479.20:FF:000001">
    <property type="entry name" value="Elongation factor Ts"/>
    <property type="match status" value="1"/>
</dbReference>
<dbReference type="Gene3D" id="1.10.286.20">
    <property type="match status" value="1"/>
</dbReference>
<dbReference type="Gene3D" id="1.10.8.10">
    <property type="entry name" value="DNA helicase RuvA subunit, C-terminal domain"/>
    <property type="match status" value="1"/>
</dbReference>
<dbReference type="Gene3D" id="3.30.479.20">
    <property type="entry name" value="Elongation factor Ts, dimerisation domain"/>
    <property type="match status" value="2"/>
</dbReference>
<dbReference type="HAMAP" id="MF_00050">
    <property type="entry name" value="EF_Ts"/>
    <property type="match status" value="1"/>
</dbReference>
<dbReference type="InterPro" id="IPR036402">
    <property type="entry name" value="EF-Ts_dimer_sf"/>
</dbReference>
<dbReference type="InterPro" id="IPR001816">
    <property type="entry name" value="Transl_elong_EFTs/EF1B"/>
</dbReference>
<dbReference type="InterPro" id="IPR014039">
    <property type="entry name" value="Transl_elong_EFTs/EF1B_dimer"/>
</dbReference>
<dbReference type="InterPro" id="IPR018101">
    <property type="entry name" value="Transl_elong_Ts_CS"/>
</dbReference>
<dbReference type="InterPro" id="IPR009060">
    <property type="entry name" value="UBA-like_sf"/>
</dbReference>
<dbReference type="NCBIfam" id="TIGR00116">
    <property type="entry name" value="tsf"/>
    <property type="match status" value="1"/>
</dbReference>
<dbReference type="PANTHER" id="PTHR11741">
    <property type="entry name" value="ELONGATION FACTOR TS"/>
    <property type="match status" value="1"/>
</dbReference>
<dbReference type="PANTHER" id="PTHR11741:SF0">
    <property type="entry name" value="ELONGATION FACTOR TS, MITOCHONDRIAL"/>
    <property type="match status" value="1"/>
</dbReference>
<dbReference type="Pfam" id="PF00889">
    <property type="entry name" value="EF_TS"/>
    <property type="match status" value="1"/>
</dbReference>
<dbReference type="SUPFAM" id="SSF54713">
    <property type="entry name" value="Elongation factor Ts (EF-Ts), dimerisation domain"/>
    <property type="match status" value="2"/>
</dbReference>
<dbReference type="SUPFAM" id="SSF46934">
    <property type="entry name" value="UBA-like"/>
    <property type="match status" value="1"/>
</dbReference>
<dbReference type="PROSITE" id="PS01126">
    <property type="entry name" value="EF_TS_1"/>
    <property type="match status" value="1"/>
</dbReference>
<dbReference type="PROSITE" id="PS01127">
    <property type="entry name" value="EF_TS_2"/>
    <property type="match status" value="1"/>
</dbReference>
<reference key="1">
    <citation type="journal article" date="2009" name="BMC Genomics">
        <title>Pseudogene accumulation in the evolutionary histories of Salmonella enterica serovars Paratyphi A and Typhi.</title>
        <authorList>
            <person name="Holt K.E."/>
            <person name="Thomson N.R."/>
            <person name="Wain J."/>
            <person name="Langridge G.C."/>
            <person name="Hasan R."/>
            <person name="Bhutta Z.A."/>
            <person name="Quail M.A."/>
            <person name="Norbertczak H."/>
            <person name="Walker D."/>
            <person name="Simmonds M."/>
            <person name="White B."/>
            <person name="Bason N."/>
            <person name="Mungall K."/>
            <person name="Dougan G."/>
            <person name="Parkhill J."/>
        </authorList>
    </citation>
    <scope>NUCLEOTIDE SEQUENCE [LARGE SCALE GENOMIC DNA]</scope>
    <source>
        <strain>AKU_12601</strain>
    </source>
</reference>
<sequence>MAEITASLVKELRERTGAGMMDCKKALTEANGDIELAIENMRKSGAIKAAKKAGNVAADGVIKTKIDGNVAFILEVNCQTDFVAKDAGFQAFADKVLDAAVAGKITDVEVLKAQFEEERVALVAKIGENINIRRVASLEGDVLGSYQHGARIGVLVAAKGADEELVKQLAMHVAASKPEFVKPEDVSVDVVEKEYQVQLDIAMQSGKPKEIAEKMVEGRMKKFTGEVSLTGQPFVMEPSKSVGQLLKEHNADVTGFIRFEVGEGIEKVETDFAAEVAAMSKQS</sequence>